<feature type="chain" id="PRO_0000413259" description="Glutamyl-tRNA(Gln) amidotransferase subunit B, mitochondrial">
    <location>
        <begin position="1"/>
        <end position="547"/>
    </location>
</feature>
<protein>
    <recommendedName>
        <fullName evidence="1">Glutamyl-tRNA(Gln) amidotransferase subunit B, mitochondrial</fullName>
        <shortName evidence="1">Glu-AdT subunit B</shortName>
        <ecNumber evidence="1">6.3.5.-</ecNumber>
    </recommendedName>
</protein>
<accession>C5DE55</accession>
<proteinExistence type="inferred from homology"/>
<gene>
    <name evidence="1" type="primary">PET112</name>
    <name type="ordered locus">KLTH0C06402g</name>
</gene>
<name>GATB_LACTC</name>
<organism>
    <name type="scientific">Lachancea thermotolerans (strain ATCC 56472 / CBS 6340 / NRRL Y-8284)</name>
    <name type="common">Yeast</name>
    <name type="synonym">Kluyveromyces thermotolerans</name>
    <dbReference type="NCBI Taxonomy" id="559295"/>
    <lineage>
        <taxon>Eukaryota</taxon>
        <taxon>Fungi</taxon>
        <taxon>Dikarya</taxon>
        <taxon>Ascomycota</taxon>
        <taxon>Saccharomycotina</taxon>
        <taxon>Saccharomycetes</taxon>
        <taxon>Saccharomycetales</taxon>
        <taxon>Saccharomycetaceae</taxon>
        <taxon>Lachancea</taxon>
    </lineage>
</organism>
<comment type="function">
    <text evidence="1">Allows the formation of correctly charged Gln-tRNA(Gln) through the transamidation of misacylated Glu-tRNA(Gln) in the mitochondria. The reaction takes place in the presence of glutamine and ATP through an activated gamma-phospho-Glu-tRNA(Gln).</text>
</comment>
<comment type="catalytic activity">
    <reaction evidence="1">
        <text>L-glutamyl-tRNA(Gln) + L-glutamine + ATP + H2O = L-glutaminyl-tRNA(Gln) + L-glutamate + ADP + phosphate + H(+)</text>
        <dbReference type="Rhea" id="RHEA:17521"/>
        <dbReference type="Rhea" id="RHEA-COMP:9681"/>
        <dbReference type="Rhea" id="RHEA-COMP:9684"/>
        <dbReference type="ChEBI" id="CHEBI:15377"/>
        <dbReference type="ChEBI" id="CHEBI:15378"/>
        <dbReference type="ChEBI" id="CHEBI:29985"/>
        <dbReference type="ChEBI" id="CHEBI:30616"/>
        <dbReference type="ChEBI" id="CHEBI:43474"/>
        <dbReference type="ChEBI" id="CHEBI:58359"/>
        <dbReference type="ChEBI" id="CHEBI:78520"/>
        <dbReference type="ChEBI" id="CHEBI:78521"/>
        <dbReference type="ChEBI" id="CHEBI:456216"/>
    </reaction>
</comment>
<comment type="subunit">
    <text evidence="1">Subunit of the heterotrimeric GatFAB amidotransferase (AdT) complex, composed of A, B and F subunits.</text>
</comment>
<comment type="subcellular location">
    <subcellularLocation>
        <location evidence="1">Mitochondrion</location>
    </subcellularLocation>
</comment>
<comment type="miscellaneous">
    <text evidence="1">This protein may be expected to contain an N-terminal transit peptide but none has been predicted.</text>
</comment>
<comment type="similarity">
    <text evidence="1">Belongs to the GatB/GatE family. GatB subfamily.</text>
</comment>
<sequence>MGCTFLPLESAFMLQFTRCFGSRTANKGFQLLPDFKLKCGLEIHTQLSTQNKLFSLSTNDPFASANLPNHHTSFFDVSLPGSQPKLNPEVVLFATKLAVALNSKVNLNSHFDRKHYFYADQPMGYQITQHYSPFAKGGFLELLGSLDSIDENSKRIQLVQLQIEQDTGKSVYRGSEGRSLIDLNRSNVPLIELVTQPNFTDLKQIRAFIKKFQNLVRHLGISTGDLETGAMRVDVNLSVNGYSRVELKNLPNTSSILSAIKYEYQRQVGLIQSGEADKYLSSSETRGWTGSSTVKLRSKETTIDYRYMPDPELPSIKISPGTVQSVSQSMPKLPDAVLHDLMSEPYGLALKDAKILAIKGNGHDQLYTQTSLLKYYLDTFSCYSTLAGQQLNPRLPTNWIIHELLGNLNRLQLPLEKAAEAFPPKKFAELLMLIQDDKISKASGKLLLFHILNEINKLSLAQPVDLSALIEGFDLNVIKKIDANELREICTEIVGGISDPKLIEGIVSGKKKNSLKFLIGQGMRVSQGRIKPHLFEQAFKELLKVKW</sequence>
<keyword id="KW-0067">ATP-binding</keyword>
<keyword id="KW-0436">Ligase</keyword>
<keyword id="KW-0496">Mitochondrion</keyword>
<keyword id="KW-0547">Nucleotide-binding</keyword>
<keyword id="KW-0648">Protein biosynthesis</keyword>
<keyword id="KW-1185">Reference proteome</keyword>
<dbReference type="EC" id="6.3.5.-" evidence="1"/>
<dbReference type="EMBL" id="CU928167">
    <property type="protein sequence ID" value="CAR22066.1"/>
    <property type="molecule type" value="Genomic_DNA"/>
</dbReference>
<dbReference type="RefSeq" id="XP_002552504.1">
    <property type="nucleotide sequence ID" value="XM_002552458.1"/>
</dbReference>
<dbReference type="SMR" id="C5DE55"/>
<dbReference type="FunCoup" id="C5DE55">
    <property type="interactions" value="404"/>
</dbReference>
<dbReference type="STRING" id="559295.C5DE55"/>
<dbReference type="GeneID" id="8291372"/>
<dbReference type="KEGG" id="lth:KLTH0C06402g"/>
<dbReference type="eggNOG" id="KOG2438">
    <property type="taxonomic scope" value="Eukaryota"/>
</dbReference>
<dbReference type="HOGENOM" id="CLU_019240_4_0_1"/>
<dbReference type="InParanoid" id="C5DE55"/>
<dbReference type="OMA" id="ARKWWMG"/>
<dbReference type="OrthoDB" id="1722066at2759"/>
<dbReference type="Proteomes" id="UP000002036">
    <property type="component" value="Chromosome C"/>
</dbReference>
<dbReference type="GO" id="GO:0030956">
    <property type="term" value="C:glutamyl-tRNA(Gln) amidotransferase complex"/>
    <property type="evidence" value="ECO:0007669"/>
    <property type="project" value="UniProtKB-UniRule"/>
</dbReference>
<dbReference type="GO" id="GO:0005739">
    <property type="term" value="C:mitochondrion"/>
    <property type="evidence" value="ECO:0007669"/>
    <property type="project" value="UniProtKB-SubCell"/>
</dbReference>
<dbReference type="GO" id="GO:0005524">
    <property type="term" value="F:ATP binding"/>
    <property type="evidence" value="ECO:0007669"/>
    <property type="project" value="UniProtKB-KW"/>
</dbReference>
<dbReference type="GO" id="GO:0050567">
    <property type="term" value="F:glutaminyl-tRNA synthase (glutamine-hydrolyzing) activity"/>
    <property type="evidence" value="ECO:0007669"/>
    <property type="project" value="UniProtKB-UniRule"/>
</dbReference>
<dbReference type="GO" id="GO:0070681">
    <property type="term" value="P:glutaminyl-tRNAGln biosynthesis via transamidation"/>
    <property type="evidence" value="ECO:0007669"/>
    <property type="project" value="UniProtKB-UniRule"/>
</dbReference>
<dbReference type="GO" id="GO:0032543">
    <property type="term" value="P:mitochondrial translation"/>
    <property type="evidence" value="ECO:0007669"/>
    <property type="project" value="UniProtKB-UniRule"/>
</dbReference>
<dbReference type="Gene3D" id="1.10.10.410">
    <property type="match status" value="1"/>
</dbReference>
<dbReference type="HAMAP" id="MF_00121">
    <property type="entry name" value="GatB"/>
    <property type="match status" value="1"/>
</dbReference>
<dbReference type="InterPro" id="IPR017959">
    <property type="entry name" value="Asn/Gln-tRNA_amidoTrfase_suB/E"/>
</dbReference>
<dbReference type="InterPro" id="IPR006075">
    <property type="entry name" value="Asn/Gln-tRNA_Trfase_suB/E_cat"/>
</dbReference>
<dbReference type="InterPro" id="IPR018027">
    <property type="entry name" value="Asn/Gln_amidotransferase"/>
</dbReference>
<dbReference type="InterPro" id="IPR003789">
    <property type="entry name" value="Asn/Gln_tRNA_amidoTrase-B-like"/>
</dbReference>
<dbReference type="InterPro" id="IPR004413">
    <property type="entry name" value="GatB"/>
</dbReference>
<dbReference type="InterPro" id="IPR023168">
    <property type="entry name" value="GatB_Yqey_C_2"/>
</dbReference>
<dbReference type="InterPro" id="IPR017958">
    <property type="entry name" value="Gln-tRNA_amidoTrfase_suB_CS"/>
</dbReference>
<dbReference type="InterPro" id="IPR014746">
    <property type="entry name" value="Gln_synth/guanido_kin_cat_dom"/>
</dbReference>
<dbReference type="NCBIfam" id="TIGR00133">
    <property type="entry name" value="gatB"/>
    <property type="match status" value="1"/>
</dbReference>
<dbReference type="NCBIfam" id="NF004012">
    <property type="entry name" value="PRK05477.1-2"/>
    <property type="match status" value="1"/>
</dbReference>
<dbReference type="PANTHER" id="PTHR11659">
    <property type="entry name" value="GLUTAMYL-TRNA GLN AMIDOTRANSFERASE SUBUNIT B MITOCHONDRIAL AND PROKARYOTIC PET112-RELATED"/>
    <property type="match status" value="1"/>
</dbReference>
<dbReference type="PANTHER" id="PTHR11659:SF0">
    <property type="entry name" value="GLUTAMYL-TRNA(GLN) AMIDOTRANSFERASE SUBUNIT B, MITOCHONDRIAL"/>
    <property type="match status" value="1"/>
</dbReference>
<dbReference type="Pfam" id="PF02934">
    <property type="entry name" value="GatB_N"/>
    <property type="match status" value="1"/>
</dbReference>
<dbReference type="Pfam" id="PF02637">
    <property type="entry name" value="GatB_Yqey"/>
    <property type="match status" value="1"/>
</dbReference>
<dbReference type="SMART" id="SM00845">
    <property type="entry name" value="GatB_Yqey"/>
    <property type="match status" value="1"/>
</dbReference>
<dbReference type="SUPFAM" id="SSF89095">
    <property type="entry name" value="GatB/YqeY motif"/>
    <property type="match status" value="1"/>
</dbReference>
<dbReference type="SUPFAM" id="SSF55931">
    <property type="entry name" value="Glutamine synthetase/guanido kinase"/>
    <property type="match status" value="1"/>
</dbReference>
<dbReference type="PROSITE" id="PS01234">
    <property type="entry name" value="GATB"/>
    <property type="match status" value="1"/>
</dbReference>
<evidence type="ECO:0000255" key="1">
    <source>
        <dbReference type="HAMAP-Rule" id="MF_03147"/>
    </source>
</evidence>
<reference key="1">
    <citation type="journal article" date="2009" name="Genome Res.">
        <title>Comparative genomics of protoploid Saccharomycetaceae.</title>
        <authorList>
            <consortium name="The Genolevures Consortium"/>
            <person name="Souciet J.-L."/>
            <person name="Dujon B."/>
            <person name="Gaillardin C."/>
            <person name="Johnston M."/>
            <person name="Baret P.V."/>
            <person name="Cliften P."/>
            <person name="Sherman D.J."/>
            <person name="Weissenbach J."/>
            <person name="Westhof E."/>
            <person name="Wincker P."/>
            <person name="Jubin C."/>
            <person name="Poulain J."/>
            <person name="Barbe V."/>
            <person name="Segurens B."/>
            <person name="Artiguenave F."/>
            <person name="Anthouard V."/>
            <person name="Vacherie B."/>
            <person name="Val M.-E."/>
            <person name="Fulton R.S."/>
            <person name="Minx P."/>
            <person name="Wilson R."/>
            <person name="Durrens P."/>
            <person name="Jean G."/>
            <person name="Marck C."/>
            <person name="Martin T."/>
            <person name="Nikolski M."/>
            <person name="Rolland T."/>
            <person name="Seret M.-L."/>
            <person name="Casaregola S."/>
            <person name="Despons L."/>
            <person name="Fairhead C."/>
            <person name="Fischer G."/>
            <person name="Lafontaine I."/>
            <person name="Leh V."/>
            <person name="Lemaire M."/>
            <person name="de Montigny J."/>
            <person name="Neuveglise C."/>
            <person name="Thierry A."/>
            <person name="Blanc-Lenfle I."/>
            <person name="Bleykasten C."/>
            <person name="Diffels J."/>
            <person name="Fritsch E."/>
            <person name="Frangeul L."/>
            <person name="Goeffon A."/>
            <person name="Jauniaux N."/>
            <person name="Kachouri-Lafond R."/>
            <person name="Payen C."/>
            <person name="Potier S."/>
            <person name="Pribylova L."/>
            <person name="Ozanne C."/>
            <person name="Richard G.-F."/>
            <person name="Sacerdot C."/>
            <person name="Straub M.-L."/>
            <person name="Talla E."/>
        </authorList>
    </citation>
    <scope>NUCLEOTIDE SEQUENCE [LARGE SCALE GENOMIC DNA]</scope>
    <source>
        <strain>ATCC 56472 / CBS 6340 / NRRL Y-8284</strain>
    </source>
</reference>